<dbReference type="EC" id="3.4.21.36"/>
<dbReference type="EMBL" id="V01234">
    <property type="protein sequence ID" value="CAA24544.1"/>
    <property type="molecule type" value="mRNA"/>
</dbReference>
<dbReference type="EMBL" id="L00117">
    <property type="protein sequence ID" value="AAA98811.1"/>
    <property type="molecule type" value="Genomic_DNA"/>
</dbReference>
<dbReference type="EMBL" id="L00112">
    <property type="protein sequence ID" value="AAA98811.1"/>
    <property type="status" value="JOINED"/>
    <property type="molecule type" value="Genomic_DNA"/>
</dbReference>
<dbReference type="EMBL" id="L00113">
    <property type="protein sequence ID" value="AAA98811.1"/>
    <property type="status" value="JOINED"/>
    <property type="molecule type" value="Genomic_DNA"/>
</dbReference>
<dbReference type="EMBL" id="L00114">
    <property type="protein sequence ID" value="AAA98811.1"/>
    <property type="status" value="JOINED"/>
    <property type="molecule type" value="Genomic_DNA"/>
</dbReference>
<dbReference type="EMBL" id="L00115">
    <property type="protein sequence ID" value="AAA98811.1"/>
    <property type="status" value="JOINED"/>
    <property type="molecule type" value="Genomic_DNA"/>
</dbReference>
<dbReference type="EMBL" id="L00116">
    <property type="protein sequence ID" value="AAA98811.1"/>
    <property type="status" value="JOINED"/>
    <property type="molecule type" value="Genomic_DNA"/>
</dbReference>
<dbReference type="PIR" id="A00960">
    <property type="entry name" value="ELRT1"/>
</dbReference>
<dbReference type="RefSeq" id="NP_036684.1">
    <property type="nucleotide sequence ID" value="NM_012552.4"/>
</dbReference>
<dbReference type="SMR" id="P00773"/>
<dbReference type="FunCoup" id="P00773">
    <property type="interactions" value="39"/>
</dbReference>
<dbReference type="STRING" id="10116.ENSRNOP00000006351"/>
<dbReference type="MEROPS" id="S01.153"/>
<dbReference type="PhosphoSitePlus" id="P00773"/>
<dbReference type="PaxDb" id="10116-ENSRNOP00000006351"/>
<dbReference type="GeneID" id="24331"/>
<dbReference type="KEGG" id="rno:24331"/>
<dbReference type="UCSC" id="RGD:2547">
    <property type="organism name" value="rat"/>
</dbReference>
<dbReference type="AGR" id="RGD:2547"/>
<dbReference type="CTD" id="1990"/>
<dbReference type="RGD" id="2547">
    <property type="gene designation" value="Cela1"/>
</dbReference>
<dbReference type="eggNOG" id="KOG3627">
    <property type="taxonomic scope" value="Eukaryota"/>
</dbReference>
<dbReference type="InParanoid" id="P00773"/>
<dbReference type="OrthoDB" id="20196at9989"/>
<dbReference type="PhylomeDB" id="P00773"/>
<dbReference type="TreeFam" id="TF330455"/>
<dbReference type="PRO" id="PR:P00773"/>
<dbReference type="Proteomes" id="UP000002494">
    <property type="component" value="Unplaced"/>
</dbReference>
<dbReference type="GO" id="GO:0005615">
    <property type="term" value="C:extracellular space"/>
    <property type="evidence" value="ECO:0000318"/>
    <property type="project" value="GO_Central"/>
</dbReference>
<dbReference type="GO" id="GO:0046872">
    <property type="term" value="F:metal ion binding"/>
    <property type="evidence" value="ECO:0007669"/>
    <property type="project" value="UniProtKB-KW"/>
</dbReference>
<dbReference type="GO" id="GO:0004252">
    <property type="term" value="F:serine-type endopeptidase activity"/>
    <property type="evidence" value="ECO:0000250"/>
    <property type="project" value="UniProtKB"/>
</dbReference>
<dbReference type="GO" id="GO:0055123">
    <property type="term" value="P:digestive system development"/>
    <property type="evidence" value="ECO:0000266"/>
    <property type="project" value="RGD"/>
</dbReference>
<dbReference type="GO" id="GO:0060309">
    <property type="term" value="P:elastin catabolic process"/>
    <property type="evidence" value="ECO:0000266"/>
    <property type="project" value="RGD"/>
</dbReference>
<dbReference type="GO" id="GO:0031017">
    <property type="term" value="P:exocrine pancreas development"/>
    <property type="evidence" value="ECO:0000266"/>
    <property type="project" value="RGD"/>
</dbReference>
<dbReference type="GO" id="GO:0006954">
    <property type="term" value="P:inflammatory response"/>
    <property type="evidence" value="ECO:0000266"/>
    <property type="project" value="RGD"/>
</dbReference>
<dbReference type="GO" id="GO:0035264">
    <property type="term" value="P:multicellular organism growth"/>
    <property type="evidence" value="ECO:0000266"/>
    <property type="project" value="RGD"/>
</dbReference>
<dbReference type="GO" id="GO:0000122">
    <property type="term" value="P:negative regulation of transcription by RNA polymerase II"/>
    <property type="evidence" value="ECO:0000266"/>
    <property type="project" value="RGD"/>
</dbReference>
<dbReference type="GO" id="GO:0061113">
    <property type="term" value="P:pancreas morphogenesis"/>
    <property type="evidence" value="ECO:0000266"/>
    <property type="project" value="RGD"/>
</dbReference>
<dbReference type="GO" id="GO:0045766">
    <property type="term" value="P:positive regulation of angiogenesis"/>
    <property type="evidence" value="ECO:0000266"/>
    <property type="project" value="RGD"/>
</dbReference>
<dbReference type="GO" id="GO:0045944">
    <property type="term" value="P:positive regulation of transcription by RNA polymerase II"/>
    <property type="evidence" value="ECO:0000266"/>
    <property type="project" value="RGD"/>
</dbReference>
<dbReference type="GO" id="GO:0009791">
    <property type="term" value="P:post-embryonic development"/>
    <property type="evidence" value="ECO:0000266"/>
    <property type="project" value="RGD"/>
</dbReference>
<dbReference type="GO" id="GO:0006508">
    <property type="term" value="P:proteolysis"/>
    <property type="evidence" value="ECO:0000318"/>
    <property type="project" value="GO_Central"/>
</dbReference>
<dbReference type="GO" id="GO:0045595">
    <property type="term" value="P:regulation of cell differentiation"/>
    <property type="evidence" value="ECO:0000266"/>
    <property type="project" value="RGD"/>
</dbReference>
<dbReference type="GO" id="GO:0042127">
    <property type="term" value="P:regulation of cell population proliferation"/>
    <property type="evidence" value="ECO:0000266"/>
    <property type="project" value="RGD"/>
</dbReference>
<dbReference type="GO" id="GO:0048771">
    <property type="term" value="P:tissue remodeling"/>
    <property type="evidence" value="ECO:0000266"/>
    <property type="project" value="RGD"/>
</dbReference>
<dbReference type="GO" id="GO:0006366">
    <property type="term" value="P:transcription by RNA polymerase II"/>
    <property type="evidence" value="ECO:0000266"/>
    <property type="project" value="RGD"/>
</dbReference>
<dbReference type="GO" id="GO:0016055">
    <property type="term" value="P:Wnt signaling pathway"/>
    <property type="evidence" value="ECO:0000266"/>
    <property type="project" value="RGD"/>
</dbReference>
<dbReference type="CDD" id="cd00190">
    <property type="entry name" value="Tryp_SPc"/>
    <property type="match status" value="1"/>
</dbReference>
<dbReference type="FunFam" id="2.40.10.10:FF:000280">
    <property type="match status" value="1"/>
</dbReference>
<dbReference type="FunFam" id="2.40.10.10:FF:000122">
    <property type="entry name" value="Chymotrypsin-like elastase family member 1"/>
    <property type="match status" value="1"/>
</dbReference>
<dbReference type="Gene3D" id="2.40.10.10">
    <property type="entry name" value="Trypsin-like serine proteases"/>
    <property type="match status" value="2"/>
</dbReference>
<dbReference type="InterPro" id="IPR050850">
    <property type="entry name" value="Peptidase_S1_Elastase_sf"/>
</dbReference>
<dbReference type="InterPro" id="IPR009003">
    <property type="entry name" value="Peptidase_S1_PA"/>
</dbReference>
<dbReference type="InterPro" id="IPR043504">
    <property type="entry name" value="Peptidase_S1_PA_chymotrypsin"/>
</dbReference>
<dbReference type="InterPro" id="IPR001314">
    <property type="entry name" value="Peptidase_S1A"/>
</dbReference>
<dbReference type="InterPro" id="IPR001254">
    <property type="entry name" value="Trypsin_dom"/>
</dbReference>
<dbReference type="InterPro" id="IPR018114">
    <property type="entry name" value="TRYPSIN_HIS"/>
</dbReference>
<dbReference type="InterPro" id="IPR033116">
    <property type="entry name" value="TRYPSIN_SER"/>
</dbReference>
<dbReference type="PANTHER" id="PTHR24257">
    <property type="entry name" value="CHYMOTRYPSIN-LIKE ELASTASE FAMILY MEMBER"/>
    <property type="match status" value="1"/>
</dbReference>
<dbReference type="PANTHER" id="PTHR24257:SF0">
    <property type="entry name" value="CHYMOTRYPSIN-LIKE ELASTASE FAMILY MEMBER 1"/>
    <property type="match status" value="1"/>
</dbReference>
<dbReference type="Pfam" id="PF00089">
    <property type="entry name" value="Trypsin"/>
    <property type="match status" value="1"/>
</dbReference>
<dbReference type="PRINTS" id="PR00722">
    <property type="entry name" value="CHYMOTRYPSIN"/>
</dbReference>
<dbReference type="SMART" id="SM00020">
    <property type="entry name" value="Tryp_SPc"/>
    <property type="match status" value="1"/>
</dbReference>
<dbReference type="SUPFAM" id="SSF50494">
    <property type="entry name" value="Trypsin-like serine proteases"/>
    <property type="match status" value="1"/>
</dbReference>
<dbReference type="PROSITE" id="PS50240">
    <property type="entry name" value="TRYPSIN_DOM"/>
    <property type="match status" value="1"/>
</dbReference>
<dbReference type="PROSITE" id="PS00134">
    <property type="entry name" value="TRYPSIN_HIS"/>
    <property type="match status" value="1"/>
</dbReference>
<dbReference type="PROSITE" id="PS00135">
    <property type="entry name" value="TRYPSIN_SER"/>
    <property type="match status" value="1"/>
</dbReference>
<keyword id="KW-0106">Calcium</keyword>
<keyword id="KW-0903">Direct protein sequencing</keyword>
<keyword id="KW-1015">Disulfide bond</keyword>
<keyword id="KW-0378">Hydrolase</keyword>
<keyword id="KW-0479">Metal-binding</keyword>
<keyword id="KW-0645">Protease</keyword>
<keyword id="KW-1185">Reference proteome</keyword>
<keyword id="KW-0964">Secreted</keyword>
<keyword id="KW-0720">Serine protease</keyword>
<keyword id="KW-0732">Signal</keyword>
<keyword id="KW-0865">Zymogen</keyword>
<evidence type="ECO:0000250" key="1">
    <source>
        <dbReference type="UniProtKB" id="P00772"/>
    </source>
</evidence>
<evidence type="ECO:0000250" key="2">
    <source>
        <dbReference type="UniProtKB" id="Q91X79"/>
    </source>
</evidence>
<evidence type="ECO:0000255" key="3">
    <source>
        <dbReference type="PROSITE-ProRule" id="PRU00274"/>
    </source>
</evidence>
<evidence type="ECO:0000269" key="4">
    <source>
    </source>
</evidence>
<evidence type="ECO:0000305" key="5"/>
<name>CELA1_RAT</name>
<reference key="1">
    <citation type="journal article" date="1982" name="Biochemistry">
        <title>Primary structure of two distinct rat pancreatic preproelastases determined by sequence analysis of the complete cloned messenger ribonucleic acid sequences.</title>
        <authorList>
            <person name="MacDonald R.J."/>
            <person name="Swift G.H."/>
            <person name="Quinto C."/>
            <person name="Swain W."/>
            <person name="Pictet R.L."/>
            <person name="Nikovits W."/>
            <person name="Rutter W.J."/>
        </authorList>
    </citation>
    <scope>NUCLEOTIDE SEQUENCE [GENOMIC DNA]</scope>
</reference>
<reference key="2">
    <citation type="journal article" date="1984" name="J. Biol. Chem.">
        <title>Structure of the two related elastase genes expressed in the rat pancreas.</title>
        <authorList>
            <person name="Swift G.H."/>
            <person name="Craik C.S."/>
            <person name="Stary S.J."/>
            <person name="Quinto C."/>
            <person name="Lahaie R.G."/>
            <person name="Rutter W.J."/>
            <person name="MacDonald R.J."/>
        </authorList>
    </citation>
    <scope>NUCLEOTIDE SEQUENCE [GENOMIC DNA]</scope>
</reference>
<reference key="3">
    <citation type="journal article" date="1983" name="Biochemistry">
        <title>Isolation and characterization of rat pancreatic elastase.</title>
        <authorList>
            <person name="Largman C."/>
        </authorList>
    </citation>
    <scope>PROTEIN SEQUENCE OF 17-45</scope>
    <source>
        <tissue>Pancreas</tissue>
    </source>
</reference>
<protein>
    <recommendedName>
        <fullName>Chymotrypsin-like elastase family member 1</fullName>
        <ecNumber>3.4.21.36</ecNumber>
    </recommendedName>
    <alternativeName>
        <fullName>Elastase-1</fullName>
    </alternativeName>
</protein>
<feature type="signal peptide" evidence="4">
    <location>
        <begin position="1"/>
        <end position="16"/>
    </location>
</feature>
<feature type="propeptide" id="PRO_0000027683" description="Activation peptide">
    <location>
        <begin position="17"/>
        <end position="26"/>
    </location>
</feature>
<feature type="chain" id="PRO_0000027684" description="Chymotrypsin-like elastase family member 1">
    <location>
        <begin position="27"/>
        <end position="266"/>
    </location>
</feature>
<feature type="domain" description="Peptidase S1" evidence="3">
    <location>
        <begin position="27"/>
        <end position="264"/>
    </location>
</feature>
<feature type="active site" description="Charge relay system" evidence="1">
    <location>
        <position position="71"/>
    </location>
</feature>
<feature type="active site" description="Charge relay system" evidence="1">
    <location>
        <position position="119"/>
    </location>
</feature>
<feature type="active site" description="Charge relay system" evidence="1">
    <location>
        <position position="214"/>
    </location>
</feature>
<feature type="binding site" evidence="1">
    <location>
        <position position="85"/>
    </location>
    <ligand>
        <name>Ca(2+)</name>
        <dbReference type="ChEBI" id="CHEBI:29108"/>
    </ligand>
</feature>
<feature type="binding site" evidence="1">
    <location>
        <position position="87"/>
    </location>
    <ligand>
        <name>Ca(2+)</name>
        <dbReference type="ChEBI" id="CHEBI:29108"/>
    </ligand>
</feature>
<feature type="binding site" evidence="1">
    <location>
        <position position="90"/>
    </location>
    <ligand>
        <name>Ca(2+)</name>
        <dbReference type="ChEBI" id="CHEBI:29108"/>
    </ligand>
</feature>
<feature type="binding site" evidence="1">
    <location>
        <position position="95"/>
    </location>
    <ligand>
        <name>Ca(2+)</name>
        <dbReference type="ChEBI" id="CHEBI:29108"/>
    </ligand>
</feature>
<feature type="disulfide bond" evidence="3">
    <location>
        <begin position="56"/>
        <end position="72"/>
    </location>
</feature>
<feature type="disulfide bond" evidence="3">
    <location>
        <begin position="153"/>
        <end position="220"/>
    </location>
</feature>
<feature type="disulfide bond" evidence="3">
    <location>
        <begin position="184"/>
        <end position="200"/>
    </location>
</feature>
<feature type="disulfide bond" evidence="3">
    <location>
        <begin position="210"/>
        <end position="240"/>
    </location>
</feature>
<feature type="sequence conflict" description="In Ref. 2; AAA98811." evidence="5" ref="2">
    <original>M</original>
    <variation>V</variation>
    <location>
        <position position="104"/>
    </location>
</feature>
<feature type="sequence conflict" description="In Ref. 2; AAA98811." evidence="5" ref="2">
    <original>T</original>
    <variation>N</variation>
    <location>
        <position position="108"/>
    </location>
</feature>
<feature type="sequence conflict" description="In Ref. 2; AAA98811." evidence="5" ref="2">
    <original>K</original>
    <variation>R</variation>
    <location>
        <position position="244"/>
    </location>
</feature>
<feature type="sequence conflict" description="In Ref. 2; AAA98811." evidence="5" ref="2">
    <original>T</original>
    <variation>N</variation>
    <location>
        <position position="266"/>
    </location>
</feature>
<accession>P00773</accession>
<gene>
    <name type="primary">Cela1</name>
    <name type="synonym">Ela1</name>
</gene>
<sequence>MLRFLVFASLVLYGHSTQDFPETNARVVGGAEARRNSWPSQISLQYLSGGSWYHTCGGTLIRRNWVMTAAHCVSSQMTFRVVVGDHNLSQNDGTEQYVSVQKIMVHPTWNSNNVAAGYDIALLRLAQSVTLNNYVQLAVLPQEGTILANNNPCYITGWGRTRTNGQLSQTLQQAYLPSVDYSICSSSSYWGSTVKTTMVCAGGDGVRSGCQGDSGGPLHCLVNGQYSVHGVTSFVSSMGCNVSKKPTVFTRVSAYISWMNNVIAYT</sequence>
<comment type="function">
    <text evidence="2">Serine proteases that hydrolyze many proteins in addition to elastin.</text>
</comment>
<comment type="catalytic activity">
    <reaction evidence="2">
        <text>Hydrolysis of proteins, including elastin. Preferential cleavage: Ala-|-Xaa.</text>
        <dbReference type="EC" id="3.4.21.36"/>
    </reaction>
</comment>
<comment type="cofactor">
    <cofactor evidence="1">
        <name>Ca(2+)</name>
        <dbReference type="ChEBI" id="CHEBI:29108"/>
    </cofactor>
    <text evidence="1">Binds 1 Ca(2+) ion per subunit.</text>
</comment>
<comment type="subcellular location">
    <subcellularLocation>
        <location evidence="1">Secreted</location>
    </subcellularLocation>
</comment>
<comment type="tissue specificity">
    <text>Pancreas.</text>
</comment>
<comment type="similarity">
    <text evidence="3">Belongs to the peptidase S1 family. Elastase subfamily.</text>
</comment>
<organism>
    <name type="scientific">Rattus norvegicus</name>
    <name type="common">Rat</name>
    <dbReference type="NCBI Taxonomy" id="10116"/>
    <lineage>
        <taxon>Eukaryota</taxon>
        <taxon>Metazoa</taxon>
        <taxon>Chordata</taxon>
        <taxon>Craniata</taxon>
        <taxon>Vertebrata</taxon>
        <taxon>Euteleostomi</taxon>
        <taxon>Mammalia</taxon>
        <taxon>Eutheria</taxon>
        <taxon>Euarchontoglires</taxon>
        <taxon>Glires</taxon>
        <taxon>Rodentia</taxon>
        <taxon>Myomorpha</taxon>
        <taxon>Muroidea</taxon>
        <taxon>Muridae</taxon>
        <taxon>Murinae</taxon>
        <taxon>Rattus</taxon>
    </lineage>
</organism>
<proteinExistence type="evidence at protein level"/>